<protein>
    <recommendedName>
        <fullName evidence="4">Cytochrome P450 71D445</fullName>
        <shortName evidence="4">ElCYP71D445</shortName>
    </recommendedName>
    <alternativeName>
        <fullName evidence="6">4,5,8-trihydroxycasbene synthase</fullName>
        <ecNumber evidence="3">1.14.14.-</ecNumber>
    </alternativeName>
    <alternativeName>
        <fullName evidence="6">4,8-dihydroxycasbene synthase</fullName>
        <ecNumber evidence="3">1.14.14.-</ecNumber>
    </alternativeName>
    <alternativeName>
        <fullName evidence="6">8-hydroxycasbene synthase</fullName>
        <ecNumber evidence="3">1.14.14.-</ecNumber>
    </alternativeName>
</protein>
<comment type="function">
    <text evidence="3">Involved in the biosynthesis of macrocyclic lathyrane type diterpenoids (also called Euphorbia factors) natural products, including the cyclization route from casbene to jolkinol C, a precursor for ingenol mebutate that is used to treat actinic keratosis, a precancerous skin condition (PubMed:27506796). Catalyzes the hydroxylation of (-)-casbene and 4-hydroxycasbene to produce 8-hydroxycasbene and 4,8-dihydroxycasbene, respectively (PubMed:27506796). Also mediates the formation of 4-hydroxy-8-ketocasbene from 4,8-dihydroxycasbene (PubMed:27506796). Together with ADH1, triggers the biosynthesis of 8-ketocasbene from 8-hydroxycasbene (PubMed:27506796).</text>
</comment>
<comment type="catalytic activity">
    <reaction evidence="3">
        <text>(-)-casbene + reduced [NADPH--hemoprotein reductase] + O2 = 8-hydroxycasbene + oxidized [NADPH--hemoprotein reductase] + H2O + H(+)</text>
        <dbReference type="Rhea" id="RHEA:65584"/>
        <dbReference type="Rhea" id="RHEA-COMP:11964"/>
        <dbReference type="Rhea" id="RHEA-COMP:11965"/>
        <dbReference type="ChEBI" id="CHEBI:15377"/>
        <dbReference type="ChEBI" id="CHEBI:15378"/>
        <dbReference type="ChEBI" id="CHEBI:15379"/>
        <dbReference type="ChEBI" id="CHEBI:57618"/>
        <dbReference type="ChEBI" id="CHEBI:58210"/>
        <dbReference type="ChEBI" id="CHEBI:157595"/>
        <dbReference type="ChEBI" id="CHEBI:157600"/>
    </reaction>
    <physiologicalReaction direction="left-to-right" evidence="3">
        <dbReference type="Rhea" id="RHEA:65585"/>
    </physiologicalReaction>
</comment>
<comment type="catalytic activity">
    <reaction evidence="3">
        <text>4-hydroxycasbene + reduced [NADPH--hemoprotein reductase] + O2 = 4,8-dihydroxycasbene + oxidized [NADPH--hemoprotein reductase] + H2O + H(+)</text>
        <dbReference type="Rhea" id="RHEA:65596"/>
        <dbReference type="Rhea" id="RHEA-COMP:11964"/>
        <dbReference type="Rhea" id="RHEA-COMP:11965"/>
        <dbReference type="ChEBI" id="CHEBI:15377"/>
        <dbReference type="ChEBI" id="CHEBI:15378"/>
        <dbReference type="ChEBI" id="CHEBI:15379"/>
        <dbReference type="ChEBI" id="CHEBI:57618"/>
        <dbReference type="ChEBI" id="CHEBI:58210"/>
        <dbReference type="ChEBI" id="CHEBI:156578"/>
        <dbReference type="ChEBI" id="CHEBI:157601"/>
    </reaction>
    <physiologicalReaction direction="left-to-right" evidence="3">
        <dbReference type="Rhea" id="RHEA:65597"/>
    </physiologicalReaction>
</comment>
<comment type="catalytic activity">
    <reaction evidence="3">
        <text>4,8-dihydroxycasbene + reduced [NADPH--hemoprotein reductase] + O2 = 4,5,8-trihydroxycasbene + oxidized [NADPH--hemoprotein reductase] + H2O + H(+)</text>
        <dbReference type="Rhea" id="RHEA:67032"/>
        <dbReference type="Rhea" id="RHEA-COMP:11964"/>
        <dbReference type="Rhea" id="RHEA-COMP:11965"/>
        <dbReference type="ChEBI" id="CHEBI:15377"/>
        <dbReference type="ChEBI" id="CHEBI:15378"/>
        <dbReference type="ChEBI" id="CHEBI:15379"/>
        <dbReference type="ChEBI" id="CHEBI:57618"/>
        <dbReference type="ChEBI" id="CHEBI:58210"/>
        <dbReference type="ChEBI" id="CHEBI:157601"/>
        <dbReference type="ChEBI" id="CHEBI:157602"/>
    </reaction>
    <physiologicalReaction direction="left-to-right" evidence="3">
        <dbReference type="Rhea" id="RHEA:67033"/>
    </physiologicalReaction>
</comment>
<comment type="cofactor">
    <cofactor evidence="1">
        <name>heme</name>
        <dbReference type="ChEBI" id="CHEBI:30413"/>
    </cofactor>
</comment>
<comment type="pathway">
    <text evidence="3">Secondary metabolite biosynthesis; terpenoid biosynthesis.</text>
</comment>
<comment type="subcellular location">
    <subcellularLocation>
        <location evidence="2">Membrane</location>
        <topology evidence="5">Single-pass type II membrane protein</topology>
    </subcellularLocation>
</comment>
<comment type="tissue specificity">
    <text evidence="3">Expressed in mature seeds.</text>
</comment>
<comment type="similarity">
    <text evidence="5">Belongs to the cytochrome P450 family.</text>
</comment>
<name>C7D45_EUPLT</name>
<sequence length="513" mass="58226">MELEFRSPSSPSEWAITSTITLLFLILLRKILKPKTPTPNLPPGPKKLPLIGNIHQLIGGIPHQKMRDLSQIHGPIMHLKLGELENVIISSKEAAEKILKTHDVLFAQRPQMIVAKSVTYDFHDITFSPYGDYWRQLRKITMIELLAAKRVLSFRAIREEETTKLVELIRGFQSGESINFTRMIDSTTYGITSRAACGKIWEGENLFISSLEKIMFEVGSGISFADAYPSVKLLKVFSGIRIRVDRLQKNIDKIFESIIEEHREERKGRKKGEDDLDLVDVLLNLQESGTLEIPLSDVTIKAVIMDMFVAGVDTSAATTEWLMSELIKNPEVMKKAQAEIREKFKGKASIDEADLQDLHYLKLVIKETFRLHPSVPLLVPRECRESCVIEGYDIPVKTKIMVNAWAMGRDTKYWGEDAEKFKPERFIDSPIDFKGHNFEYLPFGSGRRSCPGMAFGVANVEIAVAKLLYHFDWRLGDGMVPENLDMTEKIGGTTRRLSELYIIPTPYVPQNSA</sequence>
<gene>
    <name evidence="4" type="primary">CYP71D445</name>
</gene>
<dbReference type="EC" id="1.14.14.-" evidence="3"/>
<dbReference type="EMBL" id="KR350668">
    <property type="protein sequence ID" value="AMY98418.1"/>
    <property type="molecule type" value="mRNA"/>
</dbReference>
<dbReference type="SMR" id="A0A165U5Z9"/>
<dbReference type="UniPathway" id="UPA00213"/>
<dbReference type="GO" id="GO:0016020">
    <property type="term" value="C:membrane"/>
    <property type="evidence" value="ECO:0007669"/>
    <property type="project" value="UniProtKB-SubCell"/>
</dbReference>
<dbReference type="GO" id="GO:0020037">
    <property type="term" value="F:heme binding"/>
    <property type="evidence" value="ECO:0007669"/>
    <property type="project" value="InterPro"/>
</dbReference>
<dbReference type="GO" id="GO:0005506">
    <property type="term" value="F:iron ion binding"/>
    <property type="evidence" value="ECO:0007669"/>
    <property type="project" value="InterPro"/>
</dbReference>
<dbReference type="GO" id="GO:0004497">
    <property type="term" value="F:monooxygenase activity"/>
    <property type="evidence" value="ECO:0007669"/>
    <property type="project" value="UniProtKB-KW"/>
</dbReference>
<dbReference type="GO" id="GO:0016705">
    <property type="term" value="F:oxidoreductase activity, acting on paired donors, with incorporation or reduction of molecular oxygen"/>
    <property type="evidence" value="ECO:0007669"/>
    <property type="project" value="InterPro"/>
</dbReference>
<dbReference type="GO" id="GO:0016114">
    <property type="term" value="P:terpenoid biosynthetic process"/>
    <property type="evidence" value="ECO:0007669"/>
    <property type="project" value="UniProtKB-UniPathway"/>
</dbReference>
<dbReference type="CDD" id="cd11072">
    <property type="entry name" value="CYP71-like"/>
    <property type="match status" value="1"/>
</dbReference>
<dbReference type="FunFam" id="1.10.630.10:FF:000043">
    <property type="entry name" value="Cytochrome P450 99A2"/>
    <property type="match status" value="1"/>
</dbReference>
<dbReference type="Gene3D" id="1.10.630.10">
    <property type="entry name" value="Cytochrome P450"/>
    <property type="match status" value="1"/>
</dbReference>
<dbReference type="InterPro" id="IPR052306">
    <property type="entry name" value="CYP450_71D"/>
</dbReference>
<dbReference type="InterPro" id="IPR001128">
    <property type="entry name" value="Cyt_P450"/>
</dbReference>
<dbReference type="InterPro" id="IPR017972">
    <property type="entry name" value="Cyt_P450_CS"/>
</dbReference>
<dbReference type="InterPro" id="IPR002401">
    <property type="entry name" value="Cyt_P450_E_grp-I"/>
</dbReference>
<dbReference type="InterPro" id="IPR036396">
    <property type="entry name" value="Cyt_P450_sf"/>
</dbReference>
<dbReference type="PANTHER" id="PTHR47953:SF19">
    <property type="entry name" value="OS06G0641600 PROTEIN"/>
    <property type="match status" value="1"/>
</dbReference>
<dbReference type="PANTHER" id="PTHR47953">
    <property type="entry name" value="OS08G0105600 PROTEIN"/>
    <property type="match status" value="1"/>
</dbReference>
<dbReference type="Pfam" id="PF00067">
    <property type="entry name" value="p450"/>
    <property type="match status" value="1"/>
</dbReference>
<dbReference type="PRINTS" id="PR00463">
    <property type="entry name" value="EP450I"/>
</dbReference>
<dbReference type="PRINTS" id="PR00385">
    <property type="entry name" value="P450"/>
</dbReference>
<dbReference type="SUPFAM" id="SSF48264">
    <property type="entry name" value="Cytochrome P450"/>
    <property type="match status" value="1"/>
</dbReference>
<dbReference type="PROSITE" id="PS00086">
    <property type="entry name" value="CYTOCHROME_P450"/>
    <property type="match status" value="1"/>
</dbReference>
<organism>
    <name type="scientific">Euphorbia lathyris</name>
    <name type="common">Caper spurge</name>
    <dbReference type="NCBI Taxonomy" id="212925"/>
    <lineage>
        <taxon>Eukaryota</taxon>
        <taxon>Viridiplantae</taxon>
        <taxon>Streptophyta</taxon>
        <taxon>Embryophyta</taxon>
        <taxon>Tracheophyta</taxon>
        <taxon>Spermatophyta</taxon>
        <taxon>Magnoliopsida</taxon>
        <taxon>eudicotyledons</taxon>
        <taxon>Gunneridae</taxon>
        <taxon>Pentapetalae</taxon>
        <taxon>rosids</taxon>
        <taxon>fabids</taxon>
        <taxon>Malpighiales</taxon>
        <taxon>Euphorbiaceae</taxon>
        <taxon>Euphorbioideae</taxon>
        <taxon>Euphorbieae</taxon>
        <taxon>Euphorbia</taxon>
        <taxon>Euphorbia subgen. Esula</taxon>
        <taxon>Euphorbia sect. Lathyris</taxon>
    </lineage>
</organism>
<keyword id="KW-0349">Heme</keyword>
<keyword id="KW-0408">Iron</keyword>
<keyword id="KW-0472">Membrane</keyword>
<keyword id="KW-0479">Metal-binding</keyword>
<keyword id="KW-0503">Monooxygenase</keyword>
<keyword id="KW-0560">Oxidoreductase</keyword>
<keyword id="KW-0735">Signal-anchor</keyword>
<keyword id="KW-0812">Transmembrane</keyword>
<keyword id="KW-1133">Transmembrane helix</keyword>
<accession>A0A165U5Z9</accession>
<evidence type="ECO:0000250" key="1">
    <source>
        <dbReference type="UniProtKB" id="Q96242"/>
    </source>
</evidence>
<evidence type="ECO:0000255" key="2"/>
<evidence type="ECO:0000269" key="3">
    <source>
    </source>
</evidence>
<evidence type="ECO:0000303" key="4">
    <source>
    </source>
</evidence>
<evidence type="ECO:0000305" key="5"/>
<evidence type="ECO:0000305" key="6">
    <source>
    </source>
</evidence>
<feature type="chain" id="PRO_0000453167" description="Cytochrome P450 71D445">
    <location>
        <begin position="1"/>
        <end position="513"/>
    </location>
</feature>
<feature type="transmembrane region" description="Helical; Signal-anchor for type II membrane protein" evidence="2">
    <location>
        <begin position="12"/>
        <end position="28"/>
    </location>
</feature>
<feature type="binding site" description="axial binding residue" evidence="1">
    <location>
        <position position="450"/>
    </location>
    <ligand>
        <name>heme</name>
        <dbReference type="ChEBI" id="CHEBI:30413"/>
    </ligand>
    <ligandPart>
        <name>Fe</name>
        <dbReference type="ChEBI" id="CHEBI:18248"/>
    </ligandPart>
</feature>
<proteinExistence type="evidence at protein level"/>
<reference key="1">
    <citation type="journal article" date="2016" name="Proc. Natl. Acad. Sci. U.S.A.">
        <title>Oxidation and cyclization of casbene in the biosynthesis of Euphorbia factors from mature seeds of Euphorbia lathyris L.</title>
        <authorList>
            <person name="Luo D."/>
            <person name="Callari R."/>
            <person name="Hamberger B."/>
            <person name="Wubshet S.G."/>
            <person name="Nielsen M.T."/>
            <person name="Andersen-Ranberg J."/>
            <person name="Hallstroem B.M."/>
            <person name="Cozzi F."/>
            <person name="Heider H."/>
            <person name="Lindberg Moeller B."/>
            <person name="Staerk D."/>
            <person name="Hamberger B."/>
        </authorList>
    </citation>
    <scope>NUCLEOTIDE SEQUENCE [MRNA]</scope>
    <scope>FUNCTION</scope>
    <scope>CATALYTIC ACTIVITY</scope>
    <scope>PATHWAY</scope>
    <scope>TISSUE SPECIFICITY</scope>
    <source>
        <tissue>Seed</tissue>
    </source>
</reference>